<proteinExistence type="inferred from homology"/>
<dbReference type="EC" id="3.5.4.19" evidence="1"/>
<dbReference type="EMBL" id="CP000076">
    <property type="protein sequence ID" value="AAY95833.1"/>
    <property type="molecule type" value="Genomic_DNA"/>
</dbReference>
<dbReference type="SMR" id="Q4KJL5"/>
<dbReference type="STRING" id="220664.PFL_0424"/>
<dbReference type="KEGG" id="pfl:PFL_0424"/>
<dbReference type="PATRIC" id="fig|220664.5.peg.433"/>
<dbReference type="eggNOG" id="COG0139">
    <property type="taxonomic scope" value="Bacteria"/>
</dbReference>
<dbReference type="HOGENOM" id="CLU_048577_5_0_6"/>
<dbReference type="UniPathway" id="UPA00031">
    <property type="reaction ID" value="UER00008"/>
</dbReference>
<dbReference type="Proteomes" id="UP000008540">
    <property type="component" value="Chromosome"/>
</dbReference>
<dbReference type="GO" id="GO:0005737">
    <property type="term" value="C:cytoplasm"/>
    <property type="evidence" value="ECO:0007669"/>
    <property type="project" value="UniProtKB-SubCell"/>
</dbReference>
<dbReference type="GO" id="GO:0000287">
    <property type="term" value="F:magnesium ion binding"/>
    <property type="evidence" value="ECO:0007669"/>
    <property type="project" value="UniProtKB-UniRule"/>
</dbReference>
<dbReference type="GO" id="GO:0004635">
    <property type="term" value="F:phosphoribosyl-AMP cyclohydrolase activity"/>
    <property type="evidence" value="ECO:0007669"/>
    <property type="project" value="UniProtKB-UniRule"/>
</dbReference>
<dbReference type="GO" id="GO:0008270">
    <property type="term" value="F:zinc ion binding"/>
    <property type="evidence" value="ECO:0007669"/>
    <property type="project" value="UniProtKB-UniRule"/>
</dbReference>
<dbReference type="GO" id="GO:0000105">
    <property type="term" value="P:L-histidine biosynthetic process"/>
    <property type="evidence" value="ECO:0007669"/>
    <property type="project" value="UniProtKB-UniRule"/>
</dbReference>
<dbReference type="FunFam" id="3.10.20.810:FF:000001">
    <property type="entry name" value="Histidine biosynthesis bifunctional protein HisIE"/>
    <property type="match status" value="1"/>
</dbReference>
<dbReference type="Gene3D" id="3.10.20.810">
    <property type="entry name" value="Phosphoribosyl-AMP cyclohydrolase"/>
    <property type="match status" value="1"/>
</dbReference>
<dbReference type="HAMAP" id="MF_01021">
    <property type="entry name" value="HisI"/>
    <property type="match status" value="1"/>
</dbReference>
<dbReference type="InterPro" id="IPR026660">
    <property type="entry name" value="PRA-CH"/>
</dbReference>
<dbReference type="InterPro" id="IPR002496">
    <property type="entry name" value="PRib_AMP_CycHydrolase_dom"/>
</dbReference>
<dbReference type="InterPro" id="IPR038019">
    <property type="entry name" value="PRib_AMP_CycHydrolase_sf"/>
</dbReference>
<dbReference type="NCBIfam" id="NF000768">
    <property type="entry name" value="PRK00051.1"/>
    <property type="match status" value="1"/>
</dbReference>
<dbReference type="PANTHER" id="PTHR42945">
    <property type="entry name" value="HISTIDINE BIOSYNTHESIS BIFUNCTIONAL PROTEIN"/>
    <property type="match status" value="1"/>
</dbReference>
<dbReference type="PANTHER" id="PTHR42945:SF1">
    <property type="entry name" value="HISTIDINE BIOSYNTHESIS BIFUNCTIONAL PROTEIN HIS7"/>
    <property type="match status" value="1"/>
</dbReference>
<dbReference type="Pfam" id="PF01502">
    <property type="entry name" value="PRA-CH"/>
    <property type="match status" value="1"/>
</dbReference>
<dbReference type="SUPFAM" id="SSF141734">
    <property type="entry name" value="HisI-like"/>
    <property type="match status" value="1"/>
</dbReference>
<accession>Q4KJL5</accession>
<sequence>MKDWLDQIKWDADGLVPAIAQDHKTGRVLMMAWMNREALSLTAAENRAIYWSRSRGKLWRKGEESGHVQKLHEMRLDCDADVIILMVEQIGDIACHTGRHSCFYRVYEDGEWKTVEPVLKDPHAIYSAGH</sequence>
<protein>
    <recommendedName>
        <fullName evidence="1">Phosphoribosyl-AMP cyclohydrolase 1</fullName>
        <shortName evidence="1">PRA-CH 1</shortName>
        <ecNumber evidence="1">3.5.4.19</ecNumber>
    </recommendedName>
</protein>
<evidence type="ECO:0000255" key="1">
    <source>
        <dbReference type="HAMAP-Rule" id="MF_01021"/>
    </source>
</evidence>
<organism>
    <name type="scientific">Pseudomonas fluorescens (strain ATCC BAA-477 / NRRL B-23932 / Pf-5)</name>
    <dbReference type="NCBI Taxonomy" id="220664"/>
    <lineage>
        <taxon>Bacteria</taxon>
        <taxon>Pseudomonadati</taxon>
        <taxon>Pseudomonadota</taxon>
        <taxon>Gammaproteobacteria</taxon>
        <taxon>Pseudomonadales</taxon>
        <taxon>Pseudomonadaceae</taxon>
        <taxon>Pseudomonas</taxon>
    </lineage>
</organism>
<reference key="1">
    <citation type="journal article" date="2005" name="Nat. Biotechnol.">
        <title>Complete genome sequence of the plant commensal Pseudomonas fluorescens Pf-5.</title>
        <authorList>
            <person name="Paulsen I.T."/>
            <person name="Press C.M."/>
            <person name="Ravel J."/>
            <person name="Kobayashi D.Y."/>
            <person name="Myers G.S.A."/>
            <person name="Mavrodi D.V."/>
            <person name="DeBoy R.T."/>
            <person name="Seshadri R."/>
            <person name="Ren Q."/>
            <person name="Madupu R."/>
            <person name="Dodson R.J."/>
            <person name="Durkin A.S."/>
            <person name="Brinkac L.M."/>
            <person name="Daugherty S.C."/>
            <person name="Sullivan S.A."/>
            <person name="Rosovitz M.J."/>
            <person name="Gwinn M.L."/>
            <person name="Zhou L."/>
            <person name="Schneider D.J."/>
            <person name="Cartinhour S.W."/>
            <person name="Nelson W.C."/>
            <person name="Weidman J."/>
            <person name="Watkins K."/>
            <person name="Tran K."/>
            <person name="Khouri H."/>
            <person name="Pierson E.A."/>
            <person name="Pierson L.S. III"/>
            <person name="Thomashow L.S."/>
            <person name="Loper J.E."/>
        </authorList>
    </citation>
    <scope>NUCLEOTIDE SEQUENCE [LARGE SCALE GENOMIC DNA]</scope>
    <source>
        <strain>ATCC BAA-477 / NRRL B-23932 / Pf-5</strain>
    </source>
</reference>
<keyword id="KW-0028">Amino-acid biosynthesis</keyword>
<keyword id="KW-0963">Cytoplasm</keyword>
<keyword id="KW-0368">Histidine biosynthesis</keyword>
<keyword id="KW-0378">Hydrolase</keyword>
<keyword id="KW-0460">Magnesium</keyword>
<keyword id="KW-0479">Metal-binding</keyword>
<keyword id="KW-0862">Zinc</keyword>
<gene>
    <name evidence="1" type="primary">hisI1</name>
    <name type="ordered locus">PFL_0424</name>
</gene>
<comment type="function">
    <text evidence="1">Catalyzes the hydrolysis of the adenine ring of phosphoribosyl-AMP.</text>
</comment>
<comment type="catalytic activity">
    <reaction evidence="1">
        <text>1-(5-phospho-beta-D-ribosyl)-5'-AMP + H2O = 1-(5-phospho-beta-D-ribosyl)-5-[(5-phospho-beta-D-ribosylamino)methylideneamino]imidazole-4-carboxamide</text>
        <dbReference type="Rhea" id="RHEA:20049"/>
        <dbReference type="ChEBI" id="CHEBI:15377"/>
        <dbReference type="ChEBI" id="CHEBI:58435"/>
        <dbReference type="ChEBI" id="CHEBI:59457"/>
        <dbReference type="EC" id="3.5.4.19"/>
    </reaction>
</comment>
<comment type="cofactor">
    <cofactor evidence="1">
        <name>Mg(2+)</name>
        <dbReference type="ChEBI" id="CHEBI:18420"/>
    </cofactor>
    <text evidence="1">Binds 1 Mg(2+) ion per subunit.</text>
</comment>
<comment type="cofactor">
    <cofactor evidence="1">
        <name>Zn(2+)</name>
        <dbReference type="ChEBI" id="CHEBI:29105"/>
    </cofactor>
    <text evidence="1">Binds 1 zinc ion per subunit.</text>
</comment>
<comment type="pathway">
    <text evidence="1">Amino-acid biosynthesis; L-histidine biosynthesis; L-histidine from 5-phospho-alpha-D-ribose 1-diphosphate: step 3/9.</text>
</comment>
<comment type="subunit">
    <text evidence="1">Homodimer.</text>
</comment>
<comment type="subcellular location">
    <subcellularLocation>
        <location evidence="1">Cytoplasm</location>
    </subcellularLocation>
</comment>
<comment type="similarity">
    <text evidence="1">Belongs to the PRA-CH family.</text>
</comment>
<feature type="chain" id="PRO_0000229834" description="Phosphoribosyl-AMP cyclohydrolase 1">
    <location>
        <begin position="1"/>
        <end position="130"/>
    </location>
</feature>
<feature type="binding site" evidence="1">
    <location>
        <position position="77"/>
    </location>
    <ligand>
        <name>Mg(2+)</name>
        <dbReference type="ChEBI" id="CHEBI:18420"/>
    </ligand>
</feature>
<feature type="binding site" evidence="1">
    <location>
        <position position="78"/>
    </location>
    <ligand>
        <name>Zn(2+)</name>
        <dbReference type="ChEBI" id="CHEBI:29105"/>
        <note>ligand shared between dimeric partners</note>
    </ligand>
</feature>
<feature type="binding site" evidence="1">
    <location>
        <position position="79"/>
    </location>
    <ligand>
        <name>Mg(2+)</name>
        <dbReference type="ChEBI" id="CHEBI:18420"/>
    </ligand>
</feature>
<feature type="binding site" evidence="1">
    <location>
        <position position="81"/>
    </location>
    <ligand>
        <name>Mg(2+)</name>
        <dbReference type="ChEBI" id="CHEBI:18420"/>
    </ligand>
</feature>
<feature type="binding site" evidence="1">
    <location>
        <position position="95"/>
    </location>
    <ligand>
        <name>Zn(2+)</name>
        <dbReference type="ChEBI" id="CHEBI:29105"/>
        <note>ligand shared between dimeric partners</note>
    </ligand>
</feature>
<feature type="binding site" evidence="1">
    <location>
        <position position="102"/>
    </location>
    <ligand>
        <name>Zn(2+)</name>
        <dbReference type="ChEBI" id="CHEBI:29105"/>
        <note>ligand shared between dimeric partners</note>
    </ligand>
</feature>
<name>HIS31_PSEF5</name>